<comment type="function">
    <text evidence="4">Serine/threonine-protein kinase which regulates the localization and the function of the septins during mitosis. Phosphorylates SHS1.</text>
</comment>
<comment type="catalytic activity">
    <reaction>
        <text>L-seryl-[protein] + ATP = O-phospho-L-seryl-[protein] + ADP + H(+)</text>
        <dbReference type="Rhea" id="RHEA:17989"/>
        <dbReference type="Rhea" id="RHEA-COMP:9863"/>
        <dbReference type="Rhea" id="RHEA-COMP:11604"/>
        <dbReference type="ChEBI" id="CHEBI:15378"/>
        <dbReference type="ChEBI" id="CHEBI:29999"/>
        <dbReference type="ChEBI" id="CHEBI:30616"/>
        <dbReference type="ChEBI" id="CHEBI:83421"/>
        <dbReference type="ChEBI" id="CHEBI:456216"/>
        <dbReference type="EC" id="2.7.11.1"/>
    </reaction>
</comment>
<comment type="catalytic activity">
    <reaction>
        <text>L-threonyl-[protein] + ATP = O-phospho-L-threonyl-[protein] + ADP + H(+)</text>
        <dbReference type="Rhea" id="RHEA:46608"/>
        <dbReference type="Rhea" id="RHEA-COMP:11060"/>
        <dbReference type="Rhea" id="RHEA-COMP:11605"/>
        <dbReference type="ChEBI" id="CHEBI:15378"/>
        <dbReference type="ChEBI" id="CHEBI:30013"/>
        <dbReference type="ChEBI" id="CHEBI:30616"/>
        <dbReference type="ChEBI" id="CHEBI:61977"/>
        <dbReference type="ChEBI" id="CHEBI:456216"/>
        <dbReference type="EC" id="2.7.11.1"/>
    </reaction>
</comment>
<comment type="subunit">
    <text evidence="4">Component of the GIN4 complex composed of at least BNI5, CDC3, CDC10, CDC11, CDC12, GIN4, NAP1 and SHS1 which forms a ring at the bud neck.</text>
</comment>
<comment type="interaction">
    <interactant intactId="EBI-7595">
        <id>Q12263</id>
    </interactant>
    <interactant intactId="EBI-4178">
        <id>P32458</id>
        <label>CDC11</label>
    </interactant>
    <organismsDiffer>false</organismsDiffer>
    <experiments>7</experiments>
</comment>
<comment type="interaction">
    <interactant intactId="EBI-7595">
        <id>Q12263</id>
    </interactant>
    <interactant intactId="EBI-10968">
        <id>P32490</id>
        <label>MKK1</label>
    </interactant>
    <organismsDiffer>false</organismsDiffer>
    <experiments>2</experiments>
</comment>
<comment type="interaction">
    <interactant intactId="EBI-7595">
        <id>Q12263</id>
    </interactant>
    <interactant intactId="EBI-11850">
        <id>P25293</id>
        <label>NAP1</label>
    </interactant>
    <organismsDiffer>false</organismsDiffer>
    <experiments>12</experiments>
</comment>
<comment type="interaction">
    <interactant intactId="EBI-7595">
        <id>Q12263</id>
    </interactant>
    <interactant intactId="EBI-22083">
        <id>Q07657</id>
        <label>SHS1</label>
    </interactant>
    <organismsDiffer>false</organismsDiffer>
    <experiments>8</experiments>
</comment>
<comment type="subcellular location">
    <subcellularLocation>
        <location evidence="5">Cytoplasm</location>
    </subcellularLocation>
    <subcellularLocation>
        <location evidence="5">Bud neck</location>
    </subcellularLocation>
</comment>
<comment type="miscellaneous">
    <text evidence="6">Present with 736 molecules/cell in log phase SD medium.</text>
</comment>
<comment type="similarity">
    <text evidence="7">Belongs to the protein kinase superfamily. CAMK Ser/Thr protein kinase family. NIM1 subfamily.</text>
</comment>
<accession>Q12263</accession>
<accession>D6VTC9</accession>
<organism>
    <name type="scientific">Saccharomyces cerevisiae (strain ATCC 204508 / S288c)</name>
    <name type="common">Baker's yeast</name>
    <dbReference type="NCBI Taxonomy" id="559292"/>
    <lineage>
        <taxon>Eukaryota</taxon>
        <taxon>Fungi</taxon>
        <taxon>Dikarya</taxon>
        <taxon>Ascomycota</taxon>
        <taxon>Saccharomycotina</taxon>
        <taxon>Saccharomycetes</taxon>
        <taxon>Saccharomycetales</taxon>
        <taxon>Saccharomycetaceae</taxon>
        <taxon>Saccharomyces</taxon>
    </lineage>
</organism>
<dbReference type="EC" id="2.7.11.1"/>
<dbReference type="EMBL" id="U33140">
    <property type="protein sequence ID" value="AAA75513.1"/>
    <property type="molecule type" value="Genomic_DNA"/>
</dbReference>
<dbReference type="EMBL" id="U33057">
    <property type="protein sequence ID" value="AAB64949.1"/>
    <property type="molecule type" value="Genomic_DNA"/>
</dbReference>
<dbReference type="EMBL" id="BK006938">
    <property type="protein sequence ID" value="DAA12339.1"/>
    <property type="molecule type" value="Genomic_DNA"/>
</dbReference>
<dbReference type="PIR" id="S59359">
    <property type="entry name" value="S59359"/>
</dbReference>
<dbReference type="RefSeq" id="NP_010795.3">
    <property type="nucleotide sequence ID" value="NM_001180815.3"/>
</dbReference>
<dbReference type="SMR" id="Q12263"/>
<dbReference type="BioGRID" id="32559">
    <property type="interactions" value="331"/>
</dbReference>
<dbReference type="ComplexPortal" id="CPX-1712">
    <property type="entry name" value="Gin4 serine/threonine kinase complex"/>
</dbReference>
<dbReference type="DIP" id="DIP-2260N"/>
<dbReference type="FunCoup" id="Q12263">
    <property type="interactions" value="379"/>
</dbReference>
<dbReference type="IntAct" id="Q12263">
    <property type="interactions" value="24"/>
</dbReference>
<dbReference type="MINT" id="Q12263"/>
<dbReference type="STRING" id="4932.YDR507C"/>
<dbReference type="GlyGen" id="Q12263">
    <property type="glycosylation" value="1 site"/>
</dbReference>
<dbReference type="iPTMnet" id="Q12263"/>
<dbReference type="PaxDb" id="4932-YDR507C"/>
<dbReference type="PeptideAtlas" id="Q12263"/>
<dbReference type="EnsemblFungi" id="YDR507C_mRNA">
    <property type="protein sequence ID" value="YDR507C"/>
    <property type="gene ID" value="YDR507C"/>
</dbReference>
<dbReference type="GeneID" id="852119"/>
<dbReference type="KEGG" id="sce:YDR507C"/>
<dbReference type="AGR" id="SGD:S000002915"/>
<dbReference type="SGD" id="S000002915">
    <property type="gene designation" value="GIN4"/>
</dbReference>
<dbReference type="VEuPathDB" id="FungiDB:YDR507C"/>
<dbReference type="eggNOG" id="KOG0588">
    <property type="taxonomic scope" value="Eukaryota"/>
</dbReference>
<dbReference type="GeneTree" id="ENSGT00940000166887"/>
<dbReference type="HOGENOM" id="CLU_005276_0_0_1"/>
<dbReference type="InParanoid" id="Q12263"/>
<dbReference type="OMA" id="DWEYMDK"/>
<dbReference type="OrthoDB" id="504170at2759"/>
<dbReference type="BioCyc" id="YEAST:G3O-30028-MONOMER"/>
<dbReference type="BRENDA" id="2.7.11.1">
    <property type="organism ID" value="984"/>
</dbReference>
<dbReference type="BioGRID-ORCS" id="852119">
    <property type="hits" value="0 hits in 13 CRISPR screens"/>
</dbReference>
<dbReference type="PRO" id="PR:Q12263"/>
<dbReference type="Proteomes" id="UP000002311">
    <property type="component" value="Chromosome IV"/>
</dbReference>
<dbReference type="RNAct" id="Q12263">
    <property type="molecule type" value="protein"/>
</dbReference>
<dbReference type="GO" id="GO:0005935">
    <property type="term" value="C:cellular bud neck"/>
    <property type="evidence" value="ECO:0000314"/>
    <property type="project" value="SGD"/>
</dbReference>
<dbReference type="GO" id="GO:0005737">
    <property type="term" value="C:cytoplasm"/>
    <property type="evidence" value="ECO:0000318"/>
    <property type="project" value="GO_Central"/>
</dbReference>
<dbReference type="GO" id="GO:1990317">
    <property type="term" value="C:Gin4 complex"/>
    <property type="evidence" value="ECO:0000353"/>
    <property type="project" value="ComplexPortal"/>
</dbReference>
<dbReference type="GO" id="GO:0005634">
    <property type="term" value="C:nucleus"/>
    <property type="evidence" value="ECO:0000318"/>
    <property type="project" value="GO_Central"/>
</dbReference>
<dbReference type="GO" id="GO:0005524">
    <property type="term" value="F:ATP binding"/>
    <property type="evidence" value="ECO:0007669"/>
    <property type="project" value="UniProtKB-KW"/>
</dbReference>
<dbReference type="GO" id="GO:0004672">
    <property type="term" value="F:protein kinase activity"/>
    <property type="evidence" value="ECO:0007005"/>
    <property type="project" value="SGD"/>
</dbReference>
<dbReference type="GO" id="GO:0106310">
    <property type="term" value="F:protein serine kinase activity"/>
    <property type="evidence" value="ECO:0007669"/>
    <property type="project" value="RHEA"/>
</dbReference>
<dbReference type="GO" id="GO:0004674">
    <property type="term" value="F:protein serine/threonine kinase activity"/>
    <property type="evidence" value="ECO:0000318"/>
    <property type="project" value="GO_Central"/>
</dbReference>
<dbReference type="GO" id="GO:0007117">
    <property type="term" value="P:budding cell bud growth"/>
    <property type="evidence" value="ECO:0000315"/>
    <property type="project" value="SGD"/>
</dbReference>
<dbReference type="GO" id="GO:0000086">
    <property type="term" value="P:G2/M transition of mitotic cell cycle"/>
    <property type="evidence" value="ECO:0000318"/>
    <property type="project" value="GO_Central"/>
</dbReference>
<dbReference type="GO" id="GO:0044879">
    <property type="term" value="P:mitotic morphogenesis checkpoint signaling"/>
    <property type="evidence" value="ECO:0000315"/>
    <property type="project" value="SGD"/>
</dbReference>
<dbReference type="GO" id="GO:1901900">
    <property type="term" value="P:regulation of protein localization to cell division site"/>
    <property type="evidence" value="ECO:0000315"/>
    <property type="project" value="SGD"/>
</dbReference>
<dbReference type="GO" id="GO:0000921">
    <property type="term" value="P:septin ring assembly"/>
    <property type="evidence" value="ECO:0000315"/>
    <property type="project" value="SGD"/>
</dbReference>
<dbReference type="GO" id="GO:0000920">
    <property type="term" value="P:septum digestion after cytokinesis"/>
    <property type="evidence" value="ECO:0000303"/>
    <property type="project" value="ComplexPortal"/>
</dbReference>
<dbReference type="CDD" id="cd12194">
    <property type="entry name" value="Kcc4p_like_C"/>
    <property type="match status" value="1"/>
</dbReference>
<dbReference type="FunFam" id="3.30.310.220:FF:000001">
    <property type="entry name" value="Probable serine/threonine-protein kinase KCC4"/>
    <property type="match status" value="1"/>
</dbReference>
<dbReference type="FunFam" id="1.10.510.10:FF:000394">
    <property type="entry name" value="Serine/threonine-protein kinase HSL1"/>
    <property type="match status" value="1"/>
</dbReference>
<dbReference type="Gene3D" id="3.30.310.220">
    <property type="entry name" value="Fungal kinase associated-1 domain"/>
    <property type="match status" value="1"/>
</dbReference>
<dbReference type="Gene3D" id="1.10.510.10">
    <property type="entry name" value="Transferase(Phosphotransferase) domain 1"/>
    <property type="match status" value="1"/>
</dbReference>
<dbReference type="InterPro" id="IPR031850">
    <property type="entry name" value="Fungal_KA1_dom"/>
</dbReference>
<dbReference type="InterPro" id="IPR043024">
    <property type="entry name" value="KA1_sf_fungal"/>
</dbReference>
<dbReference type="InterPro" id="IPR011009">
    <property type="entry name" value="Kinase-like_dom_sf"/>
</dbReference>
<dbReference type="InterPro" id="IPR000719">
    <property type="entry name" value="Prot_kinase_dom"/>
</dbReference>
<dbReference type="InterPro" id="IPR017441">
    <property type="entry name" value="Protein_kinase_ATP_BS"/>
</dbReference>
<dbReference type="InterPro" id="IPR008271">
    <property type="entry name" value="Ser/Thr_kinase_AS"/>
</dbReference>
<dbReference type="PANTHER" id="PTHR24346">
    <property type="entry name" value="MAP/MICROTUBULE AFFINITY-REGULATING KINASE"/>
    <property type="match status" value="1"/>
</dbReference>
<dbReference type="PANTHER" id="PTHR24346:SF110">
    <property type="entry name" value="NON-SPECIFIC SERINE_THREONINE PROTEIN KINASE"/>
    <property type="match status" value="1"/>
</dbReference>
<dbReference type="Pfam" id="PF16797">
    <property type="entry name" value="Fungal_KA1"/>
    <property type="match status" value="1"/>
</dbReference>
<dbReference type="Pfam" id="PF00069">
    <property type="entry name" value="Pkinase"/>
    <property type="match status" value="1"/>
</dbReference>
<dbReference type="SMART" id="SM00220">
    <property type="entry name" value="S_TKc"/>
    <property type="match status" value="1"/>
</dbReference>
<dbReference type="SUPFAM" id="SSF56112">
    <property type="entry name" value="Protein kinase-like (PK-like)"/>
    <property type="match status" value="1"/>
</dbReference>
<dbReference type="PROSITE" id="PS00107">
    <property type="entry name" value="PROTEIN_KINASE_ATP"/>
    <property type="match status" value="1"/>
</dbReference>
<dbReference type="PROSITE" id="PS50011">
    <property type="entry name" value="PROTEIN_KINASE_DOM"/>
    <property type="match status" value="1"/>
</dbReference>
<dbReference type="PROSITE" id="PS00108">
    <property type="entry name" value="PROTEIN_KINASE_ST"/>
    <property type="match status" value="1"/>
</dbReference>
<reference key="1">
    <citation type="journal article" date="1998" name="J. Cell Biol.">
        <title>Role of the yeast Gin4p protein kinase in septin assembly and the relationship between septin assembly and septin function.</title>
        <authorList>
            <person name="Longtine M.S."/>
            <person name="Fares H."/>
            <person name="Pringle J.R."/>
        </authorList>
    </citation>
    <scope>NUCLEOTIDE SEQUENCE [GENOMIC DNA]</scope>
</reference>
<reference key="2">
    <citation type="journal article" date="1997" name="Nature">
        <title>The nucleotide sequence of Saccharomyces cerevisiae chromosome IV.</title>
        <authorList>
            <person name="Jacq C."/>
            <person name="Alt-Moerbe J."/>
            <person name="Andre B."/>
            <person name="Arnold W."/>
            <person name="Bahr A."/>
            <person name="Ballesta J.P.G."/>
            <person name="Bargues M."/>
            <person name="Baron L."/>
            <person name="Becker A."/>
            <person name="Biteau N."/>
            <person name="Bloecker H."/>
            <person name="Blugeon C."/>
            <person name="Boskovic J."/>
            <person name="Brandt P."/>
            <person name="Brueckner M."/>
            <person name="Buitrago M.J."/>
            <person name="Coster F."/>
            <person name="Delaveau T."/>
            <person name="del Rey F."/>
            <person name="Dujon B."/>
            <person name="Eide L.G."/>
            <person name="Garcia-Cantalejo J.M."/>
            <person name="Goffeau A."/>
            <person name="Gomez-Peris A."/>
            <person name="Granotier C."/>
            <person name="Hanemann V."/>
            <person name="Hankeln T."/>
            <person name="Hoheisel J.D."/>
            <person name="Jaeger W."/>
            <person name="Jimenez A."/>
            <person name="Jonniaux J.-L."/>
            <person name="Kraemer C."/>
            <person name="Kuester H."/>
            <person name="Laamanen P."/>
            <person name="Legros Y."/>
            <person name="Louis E.J."/>
            <person name="Moeller-Rieker S."/>
            <person name="Monnet A."/>
            <person name="Moro M."/>
            <person name="Mueller-Auer S."/>
            <person name="Nussbaumer B."/>
            <person name="Paricio N."/>
            <person name="Paulin L."/>
            <person name="Perea J."/>
            <person name="Perez-Alonso M."/>
            <person name="Perez-Ortin J.E."/>
            <person name="Pohl T.M."/>
            <person name="Prydz H."/>
            <person name="Purnelle B."/>
            <person name="Rasmussen S.W."/>
            <person name="Remacha M.A."/>
            <person name="Revuelta J.L."/>
            <person name="Rieger M."/>
            <person name="Salom D."/>
            <person name="Saluz H.P."/>
            <person name="Saiz J.E."/>
            <person name="Saren A.-M."/>
            <person name="Schaefer M."/>
            <person name="Scharfe M."/>
            <person name="Schmidt E.R."/>
            <person name="Schneider C."/>
            <person name="Scholler P."/>
            <person name="Schwarz S."/>
            <person name="Soler-Mira A."/>
            <person name="Urrestarazu L.A."/>
            <person name="Verhasselt P."/>
            <person name="Vissers S."/>
            <person name="Voet M."/>
            <person name="Volckaert G."/>
            <person name="Wagner G."/>
            <person name="Wambutt R."/>
            <person name="Wedler E."/>
            <person name="Wedler H."/>
            <person name="Woelfl S."/>
            <person name="Harris D.E."/>
            <person name="Bowman S."/>
            <person name="Brown D."/>
            <person name="Churcher C.M."/>
            <person name="Connor R."/>
            <person name="Dedman K."/>
            <person name="Gentles S."/>
            <person name="Hamlin N."/>
            <person name="Hunt S."/>
            <person name="Jones L."/>
            <person name="McDonald S."/>
            <person name="Murphy L.D."/>
            <person name="Niblett D."/>
            <person name="Odell C."/>
            <person name="Oliver K."/>
            <person name="Rajandream M.A."/>
            <person name="Richards C."/>
            <person name="Shore L."/>
            <person name="Walsh S.V."/>
            <person name="Barrell B.G."/>
            <person name="Dietrich F.S."/>
            <person name="Mulligan J.T."/>
            <person name="Allen E."/>
            <person name="Araujo R."/>
            <person name="Aviles E."/>
            <person name="Berno A."/>
            <person name="Carpenter J."/>
            <person name="Chen E."/>
            <person name="Cherry J.M."/>
            <person name="Chung E."/>
            <person name="Duncan M."/>
            <person name="Hunicke-Smith S."/>
            <person name="Hyman R.W."/>
            <person name="Komp C."/>
            <person name="Lashkari D."/>
            <person name="Lew H."/>
            <person name="Lin D."/>
            <person name="Mosedale D."/>
            <person name="Nakahara K."/>
            <person name="Namath A."/>
            <person name="Oefner P."/>
            <person name="Oh C."/>
            <person name="Petel F.X."/>
            <person name="Roberts D."/>
            <person name="Schramm S."/>
            <person name="Schroeder M."/>
            <person name="Shogren T."/>
            <person name="Shroff N."/>
            <person name="Winant A."/>
            <person name="Yelton M.A."/>
            <person name="Botstein D."/>
            <person name="Davis R.W."/>
            <person name="Johnston M."/>
            <person name="Andrews S."/>
            <person name="Brinkman R."/>
            <person name="Cooper J."/>
            <person name="Ding H."/>
            <person name="Du Z."/>
            <person name="Favello A."/>
            <person name="Fulton L."/>
            <person name="Gattung S."/>
            <person name="Greco T."/>
            <person name="Hallsworth K."/>
            <person name="Hawkins J."/>
            <person name="Hillier L.W."/>
            <person name="Jier M."/>
            <person name="Johnson D."/>
            <person name="Johnston L."/>
            <person name="Kirsten J."/>
            <person name="Kucaba T."/>
            <person name="Langston Y."/>
            <person name="Latreille P."/>
            <person name="Le T."/>
            <person name="Mardis E."/>
            <person name="Menezes S."/>
            <person name="Miller N."/>
            <person name="Nhan M."/>
            <person name="Pauley A."/>
            <person name="Peluso D."/>
            <person name="Rifkin L."/>
            <person name="Riles L."/>
            <person name="Taich A."/>
            <person name="Trevaskis E."/>
            <person name="Vignati D."/>
            <person name="Wilcox L."/>
            <person name="Wohldman P."/>
            <person name="Vaudin M."/>
            <person name="Wilson R."/>
            <person name="Waterston R."/>
            <person name="Albermann K."/>
            <person name="Hani J."/>
            <person name="Heumann K."/>
            <person name="Kleine K."/>
            <person name="Mewes H.-W."/>
            <person name="Zollner A."/>
            <person name="Zaccaria P."/>
        </authorList>
    </citation>
    <scope>NUCLEOTIDE SEQUENCE [LARGE SCALE GENOMIC DNA]</scope>
    <source>
        <strain>ATCC 204508 / S288c</strain>
    </source>
</reference>
<reference key="3">
    <citation type="journal article" date="2014" name="G3 (Bethesda)">
        <title>The reference genome sequence of Saccharomyces cerevisiae: Then and now.</title>
        <authorList>
            <person name="Engel S.R."/>
            <person name="Dietrich F.S."/>
            <person name="Fisk D.G."/>
            <person name="Binkley G."/>
            <person name="Balakrishnan R."/>
            <person name="Costanzo M.C."/>
            <person name="Dwight S.S."/>
            <person name="Hitz B.C."/>
            <person name="Karra K."/>
            <person name="Nash R.S."/>
            <person name="Weng S."/>
            <person name="Wong E.D."/>
            <person name="Lloyd P."/>
            <person name="Skrzypek M.S."/>
            <person name="Miyasato S.R."/>
            <person name="Simison M."/>
            <person name="Cherry J.M."/>
        </authorList>
    </citation>
    <scope>GENOME REANNOTATION</scope>
    <source>
        <strain>ATCC 204508 / S288c</strain>
    </source>
</reference>
<reference key="4">
    <citation type="journal article" date="2002" name="Mol. Biol. Cell">
        <title>Cell cycle-dependent assembly of a Gin4-septin complex.</title>
        <authorList>
            <person name="Mortensen E.M."/>
            <person name="McDonald H."/>
            <person name="Yates J. III"/>
            <person name="Kellogg D.R."/>
        </authorList>
    </citation>
    <scope>FUNCTION</scope>
    <scope>IDENTIFICATION BY MASS SPECTROMETRY</scope>
    <scope>IDENTIFICATION IN THE GIN4 COMPLEX</scope>
</reference>
<reference key="5">
    <citation type="journal article" date="2003" name="Nature">
        <title>Global analysis of protein localization in budding yeast.</title>
        <authorList>
            <person name="Huh W.-K."/>
            <person name="Falvo J.V."/>
            <person name="Gerke L.C."/>
            <person name="Carroll A.S."/>
            <person name="Howson R.W."/>
            <person name="Weissman J.S."/>
            <person name="O'Shea E.K."/>
        </authorList>
    </citation>
    <scope>SUBCELLULAR LOCATION [LARGE SCALE ANALYSIS]</scope>
</reference>
<reference key="6">
    <citation type="journal article" date="2003" name="Nature">
        <title>Global analysis of protein expression in yeast.</title>
        <authorList>
            <person name="Ghaemmaghami S."/>
            <person name="Huh W.-K."/>
            <person name="Bower K."/>
            <person name="Howson R.W."/>
            <person name="Belle A."/>
            <person name="Dephoure N."/>
            <person name="O'Shea E.K."/>
            <person name="Weissman J.S."/>
        </authorList>
    </citation>
    <scope>LEVEL OF PROTEIN EXPRESSION [LARGE SCALE ANALYSIS]</scope>
</reference>
<reference key="7">
    <citation type="journal article" date="2007" name="J. Proteome Res.">
        <title>Large-scale phosphorylation analysis of alpha-factor-arrested Saccharomyces cerevisiae.</title>
        <authorList>
            <person name="Li X."/>
            <person name="Gerber S.A."/>
            <person name="Rudner A.D."/>
            <person name="Beausoleil S.A."/>
            <person name="Haas W."/>
            <person name="Villen J."/>
            <person name="Elias J.E."/>
            <person name="Gygi S.P."/>
        </authorList>
    </citation>
    <scope>PHOSPHORYLATION [LARGE SCALE ANALYSIS] AT SER-471 AND SER-689</scope>
    <scope>IDENTIFICATION BY MASS SPECTROMETRY [LARGE SCALE ANALYSIS]</scope>
    <source>
        <strain>ADR376</strain>
    </source>
</reference>
<reference key="8">
    <citation type="journal article" date="2007" name="Proc. Natl. Acad. Sci. U.S.A.">
        <title>Analysis of phosphorylation sites on proteins from Saccharomyces cerevisiae by electron transfer dissociation (ETD) mass spectrometry.</title>
        <authorList>
            <person name="Chi A."/>
            <person name="Huttenhower C."/>
            <person name="Geer L.Y."/>
            <person name="Coon J.J."/>
            <person name="Syka J.E.P."/>
            <person name="Bai D.L."/>
            <person name="Shabanowitz J."/>
            <person name="Burke D.J."/>
            <person name="Troyanskaya O.G."/>
            <person name="Hunt D.F."/>
        </authorList>
    </citation>
    <scope>PHOSPHORYLATION [LARGE SCALE ANALYSIS] AT SER-805; SER-807 AND SER-930</scope>
    <scope>IDENTIFICATION BY MASS SPECTROMETRY [LARGE SCALE ANALYSIS]</scope>
</reference>
<reference key="9">
    <citation type="journal article" date="2008" name="Mol. Cell. Proteomics">
        <title>A multidimensional chromatography technology for in-depth phosphoproteome analysis.</title>
        <authorList>
            <person name="Albuquerque C.P."/>
            <person name="Smolka M.B."/>
            <person name="Payne S.H."/>
            <person name="Bafna V."/>
            <person name="Eng J."/>
            <person name="Zhou H."/>
        </authorList>
    </citation>
    <scope>PHOSPHORYLATION [LARGE SCALE ANALYSIS] AT SER-406; SER-471 AND SER-689</scope>
    <scope>IDENTIFICATION BY MASS SPECTROMETRY [LARGE SCALE ANALYSIS]</scope>
</reference>
<reference key="10">
    <citation type="journal article" date="2009" name="Science">
        <title>Global analysis of Cdk1 substrate phosphorylation sites provides insights into evolution.</title>
        <authorList>
            <person name="Holt L.J."/>
            <person name="Tuch B.B."/>
            <person name="Villen J."/>
            <person name="Johnson A.D."/>
            <person name="Gygi S.P."/>
            <person name="Morgan D.O."/>
        </authorList>
    </citation>
    <scope>PHOSPHORYLATION [LARGE SCALE ANALYSIS] AT SER-465; SER-471; SER-617; SER-719; SER-883 AND THR-884</scope>
    <scope>IDENTIFICATION BY MASS SPECTROMETRY [LARGE SCALE ANALYSIS]</scope>
</reference>
<protein>
    <recommendedName>
        <fullName>Serine/threonine-protein kinase GIN4</fullName>
        <ecNumber>2.7.11.1</ecNumber>
    </recommendedName>
    <alternativeName>
        <fullName>Growth inhibitory protein 4</fullName>
    </alternativeName>
</protein>
<proteinExistence type="evidence at protein level"/>
<name>GIN4_YEAST</name>
<sequence>MAINGNSIPAIKDNTIGPWKLGETLGLGSTGKVQLARNGSTGQEAAVKVISKAVFNTGNVSGTSIVGSTTPDALPYGIEREIIIMKLLNHPNVLRLYDVWETNTDLYLVLEYAEKGELFNLLVERGPLPEHEAIRFFRQIIIGVSYCHALGIVHRDLKPENLLLDHKYNIKIADFGMAALETEGKLLETSCGSPHYAAPEIVSGIPYQGFASDVWSCGVILFALLTGRLPFDEEDGNIRTLLLKVQKGEFEMPSDDEISREAQDLIRKILTVDPERRIKTRDILKHPLLQKYPSIRDSKSIRGLPREDTYLTPLSESNSSIDATILQNLVILWHGRDPEGIKEKLREPGANAEKTLYALLYRFKCDTQKELIKQQQVKKRQSISSVSVSPSKKVSTTPQRRRNRESLISVTSSRKKPISFNKFTASSASSSNLTTPGSSKRLSKNFSSKKKLSTIVNQSSPTPASRNKRASVINVEKNQKRASIFSTTKKNKRSSRSIKRMSLIPSMKRESVTTKLMSTYAKLAEDDDWEYIEKETKRTSSNFATLIDEIFEYEKYEQIRKEKEELERKVREAKAREELERRRRKQEEKERARKLLEKEDLKRKQEELKKQIEIDISDLEQELSKHKEEKLDGNIRSISAPMENEEKNINHLEVDIDNILRRRNFSLQTRPVSRLDPGIMFSSPTEEVSPVEPKRTENERLTTEKKILETIRRSKFLGSSFNIDKELKLSKMEYPSIIAPQRLSEERVVSDSNDGYESLILPKDGNGVSQLKDSTATTAPVSDGRLRKISEIRVPQFTRKSRHFSESNKRLSVLSMYSTKESFTNLVDILKNGNLDVNNQQSQRIPTPRSADDSEFLFETVNEEAEYTGNSSNDERLYDVGDSTIKDKSALKLNFADRFNGSNEAKQTDNLHLPILPPLNGDNELRKQNSQEGDQAHPKIKSMIPESGSSSHTEKEEENEEKEEKKPEQHKQEEDQEKREKVVDDMEPPLNKSVQKIREKNAGSQAKDHSKDHLKEHKQDKNTAIGNGSFFRKFSKSSDKTMELYAKISAKQLFNGLEKLLRGWTQYGLKNIKSHPNNLTLTGKLSSDNIFSLRSTLFEVNIYPRGKMSVVQFKKVSGSFKAVKKLVNEVENVLNKEGVLQK</sequence>
<gene>
    <name type="primary">GIN4</name>
    <name type="ordered locus">YDR507C</name>
    <name type="ORF">D9719.13</name>
</gene>
<feature type="chain" id="PRO_0000085964" description="Serine/threonine-protein kinase GIN4">
    <location>
        <begin position="1"/>
        <end position="1142"/>
    </location>
</feature>
<feature type="domain" description="Protein kinase" evidence="1">
    <location>
        <begin position="19"/>
        <end position="289"/>
    </location>
</feature>
<feature type="region of interest" description="Disordered" evidence="3">
    <location>
        <begin position="378"/>
        <end position="412"/>
    </location>
</feature>
<feature type="region of interest" description="Disordered" evidence="3">
    <location>
        <begin position="425"/>
        <end position="469"/>
    </location>
</feature>
<feature type="region of interest" description="Disordered" evidence="3">
    <location>
        <begin position="676"/>
        <end position="698"/>
    </location>
</feature>
<feature type="region of interest" description="Disordered" evidence="3">
    <location>
        <begin position="903"/>
        <end position="1031"/>
    </location>
</feature>
<feature type="compositionally biased region" description="Low complexity" evidence="3">
    <location>
        <begin position="382"/>
        <end position="395"/>
    </location>
</feature>
<feature type="compositionally biased region" description="Low complexity" evidence="3">
    <location>
        <begin position="425"/>
        <end position="440"/>
    </location>
</feature>
<feature type="compositionally biased region" description="Basic residues" evidence="3">
    <location>
        <begin position="441"/>
        <end position="452"/>
    </location>
</feature>
<feature type="compositionally biased region" description="Polar residues" evidence="3">
    <location>
        <begin position="454"/>
        <end position="465"/>
    </location>
</feature>
<feature type="compositionally biased region" description="Basic and acidic residues" evidence="3">
    <location>
        <begin position="923"/>
        <end position="937"/>
    </location>
</feature>
<feature type="compositionally biased region" description="Basic and acidic residues" evidence="3">
    <location>
        <begin position="962"/>
        <end position="984"/>
    </location>
</feature>
<feature type="compositionally biased region" description="Basic and acidic residues" evidence="3">
    <location>
        <begin position="996"/>
        <end position="1021"/>
    </location>
</feature>
<feature type="active site" description="Proton acceptor" evidence="1 2">
    <location>
        <position position="156"/>
    </location>
</feature>
<feature type="binding site" evidence="1">
    <location>
        <begin position="25"/>
        <end position="33"/>
    </location>
    <ligand>
        <name>ATP</name>
        <dbReference type="ChEBI" id="CHEBI:30616"/>
    </ligand>
</feature>
<feature type="binding site" evidence="1">
    <location>
        <position position="48"/>
    </location>
    <ligand>
        <name>ATP</name>
        <dbReference type="ChEBI" id="CHEBI:30616"/>
    </ligand>
</feature>
<feature type="modified residue" description="Phosphoserine" evidence="10">
    <location>
        <position position="406"/>
    </location>
</feature>
<feature type="modified residue" description="Phosphoserine" evidence="11">
    <location>
        <position position="465"/>
    </location>
</feature>
<feature type="modified residue" description="Phosphoserine" evidence="9 10 11">
    <location>
        <position position="471"/>
    </location>
</feature>
<feature type="modified residue" description="Phosphoserine" evidence="11">
    <location>
        <position position="617"/>
    </location>
</feature>
<feature type="modified residue" description="Phosphoserine" evidence="9 10">
    <location>
        <position position="689"/>
    </location>
</feature>
<feature type="modified residue" description="Phosphoserine" evidence="11">
    <location>
        <position position="719"/>
    </location>
</feature>
<feature type="modified residue" description="Phosphoserine" evidence="8">
    <location>
        <position position="805"/>
    </location>
</feature>
<feature type="modified residue" description="Phosphoserine" evidence="8">
    <location>
        <position position="807"/>
    </location>
</feature>
<feature type="modified residue" description="Phosphoserine" evidence="11">
    <location>
        <position position="883"/>
    </location>
</feature>
<feature type="modified residue" description="Phosphothreonine" evidence="11">
    <location>
        <position position="884"/>
    </location>
</feature>
<feature type="modified residue" description="Phosphoserine" evidence="8">
    <location>
        <position position="930"/>
    </location>
</feature>
<evidence type="ECO:0000255" key="1">
    <source>
        <dbReference type="PROSITE-ProRule" id="PRU00159"/>
    </source>
</evidence>
<evidence type="ECO:0000255" key="2">
    <source>
        <dbReference type="PROSITE-ProRule" id="PRU10027"/>
    </source>
</evidence>
<evidence type="ECO:0000256" key="3">
    <source>
        <dbReference type="SAM" id="MobiDB-lite"/>
    </source>
</evidence>
<evidence type="ECO:0000269" key="4">
    <source>
    </source>
</evidence>
<evidence type="ECO:0000269" key="5">
    <source>
    </source>
</evidence>
<evidence type="ECO:0000269" key="6">
    <source>
    </source>
</evidence>
<evidence type="ECO:0000305" key="7"/>
<evidence type="ECO:0007744" key="8">
    <source>
    </source>
</evidence>
<evidence type="ECO:0007744" key="9">
    <source>
    </source>
</evidence>
<evidence type="ECO:0007744" key="10">
    <source>
    </source>
</evidence>
<evidence type="ECO:0007744" key="11">
    <source>
    </source>
</evidence>
<keyword id="KW-0067">ATP-binding</keyword>
<keyword id="KW-0963">Cytoplasm</keyword>
<keyword id="KW-0418">Kinase</keyword>
<keyword id="KW-0547">Nucleotide-binding</keyword>
<keyword id="KW-0597">Phosphoprotein</keyword>
<keyword id="KW-1185">Reference proteome</keyword>
<keyword id="KW-0723">Serine/threonine-protein kinase</keyword>
<keyword id="KW-0808">Transferase</keyword>